<reference evidence="16 17" key="1">
    <citation type="journal article" date="1995" name="J. Biol. Chem.">
        <title>cDNA cloning, gene organization, and chromosomal localization of a human mercurial insensitive water channel. Evidence for distinct transcriptional units.</title>
        <authorList>
            <person name="Yang B."/>
            <person name="Ma T."/>
            <person name="Verkman A.S."/>
        </authorList>
    </citation>
    <scope>NUCLEOTIDE SEQUENCE [MRNA] (ISOFORMS 1 AND 2)</scope>
    <scope>FUNCTION</scope>
    <scope>SUBCELLULAR LOCATION</scope>
    <scope>TISSUE SPECIFICITY</scope>
    <source>
        <tissue>Fetal brain</tissue>
    </source>
</reference>
<reference evidence="18" key="2">
    <citation type="journal article" date="1996" name="FEBS Lett.">
        <title>A water channel closely related to rat brain aquaporin 4 is expressed in acid- and pepsinogen-secretory cells of human stomach.</title>
        <authorList>
            <person name="Misaka T."/>
            <person name="Abe K."/>
            <person name="Iwabuchi K."/>
            <person name="Kusakabe Y."/>
            <person name="Ichinose M."/>
            <person name="Miki K."/>
            <person name="Emori Y."/>
            <person name="Arai S."/>
        </authorList>
    </citation>
    <scope>NUCLEOTIDE SEQUENCE [MRNA] (ISOFORM 2)</scope>
    <scope>FUNCTION</scope>
    <scope>SUBCELLULAR LOCATION</scope>
    <scope>TISSUE SPECIFICITY</scope>
</reference>
<reference evidence="14 15" key="3">
    <citation type="journal article" date="1996" name="Proc. Natl. Acad. Sci. U.S.A.">
        <title>The human AQP4 gene: definition of the locus encoding two water channel polypeptides in brain.</title>
        <authorList>
            <person name="Lu M."/>
            <person name="Lee M.D."/>
            <person name="Smith B.L."/>
            <person name="Jung J.S."/>
            <person name="Agre P."/>
            <person name="Verdijk M.A.J."/>
            <person name="Merkx G."/>
            <person name="Rijss J.P.L."/>
            <person name="Deen P.M.T."/>
        </authorList>
    </citation>
    <scope>NUCLEOTIDE SEQUENCE [MRNA] (ISOFORMS 1 AND 2)</scope>
</reference>
<reference key="4">
    <citation type="journal article" date="2005" name="Nature">
        <title>DNA sequence and analysis of human chromosome 18.</title>
        <authorList>
            <person name="Nusbaum C."/>
            <person name="Zody M.C."/>
            <person name="Borowsky M.L."/>
            <person name="Kamal M."/>
            <person name="Kodira C.D."/>
            <person name="Taylor T.D."/>
            <person name="Whittaker C.A."/>
            <person name="Chang J.L."/>
            <person name="Cuomo C.A."/>
            <person name="Dewar K."/>
            <person name="FitzGerald M.G."/>
            <person name="Yang X."/>
            <person name="Abouelleil A."/>
            <person name="Allen N.R."/>
            <person name="Anderson S."/>
            <person name="Bloom T."/>
            <person name="Bugalter B."/>
            <person name="Butler J."/>
            <person name="Cook A."/>
            <person name="DeCaprio D."/>
            <person name="Engels R."/>
            <person name="Garber M."/>
            <person name="Gnirke A."/>
            <person name="Hafez N."/>
            <person name="Hall J.L."/>
            <person name="Norman C.H."/>
            <person name="Itoh T."/>
            <person name="Jaffe D.B."/>
            <person name="Kuroki Y."/>
            <person name="Lehoczky J."/>
            <person name="Lui A."/>
            <person name="Macdonald P."/>
            <person name="Mauceli E."/>
            <person name="Mikkelsen T.S."/>
            <person name="Naylor J.W."/>
            <person name="Nicol R."/>
            <person name="Nguyen C."/>
            <person name="Noguchi H."/>
            <person name="O'Leary S.B."/>
            <person name="Piqani B."/>
            <person name="Smith C.L."/>
            <person name="Talamas J.A."/>
            <person name="Topham K."/>
            <person name="Totoki Y."/>
            <person name="Toyoda A."/>
            <person name="Wain H.M."/>
            <person name="Young S.K."/>
            <person name="Zeng Q."/>
            <person name="Zimmer A.R."/>
            <person name="Fujiyama A."/>
            <person name="Hattori M."/>
            <person name="Birren B.W."/>
            <person name="Sakaki Y."/>
            <person name="Lander E.S."/>
        </authorList>
    </citation>
    <scope>NUCLEOTIDE SEQUENCE [LARGE SCALE GENOMIC DNA]</scope>
</reference>
<reference key="5">
    <citation type="journal article" date="2004" name="Genome Res.">
        <title>The status, quality, and expansion of the NIH full-length cDNA project: the Mammalian Gene Collection (MGC).</title>
        <authorList>
            <consortium name="The MGC Project Team"/>
        </authorList>
    </citation>
    <scope>NUCLEOTIDE SEQUENCE [LARGE SCALE MRNA] (ISOFORM 2)</scope>
    <source>
        <tissue>Lung</tissue>
    </source>
</reference>
<reference key="6">
    <citation type="journal article" date="2012" name="Hum. Mol. Genet.">
        <title>Megalencephalic leukoencephalopathy with subcortical cysts protein 1 functionally cooperates with the TRPV4 cation channel to activate the response of astrocytes to osmotic stress: dysregulation by pathological mutations.</title>
        <authorList>
            <person name="Lanciotti A."/>
            <person name="Brignone M.S."/>
            <person name="Molinari P."/>
            <person name="Visentin S."/>
            <person name="De Nuccio C."/>
            <person name="Macchia G."/>
            <person name="Aiello C."/>
            <person name="Bertini E."/>
            <person name="Aloisi F."/>
            <person name="Petrucci T.C."/>
            <person name="Ambrosini E."/>
        </authorList>
    </citation>
    <scope>SUBUNIT</scope>
</reference>
<reference key="7">
    <citation type="journal article" date="2018" name="J. Cell. Mol. Med.">
        <title>Supramolecular aggregation of aquaporin-4 is different in muscle and brain: correlation with tissue susceptibility in neuromyelitis optica.</title>
        <authorList>
            <person name="Rosito S."/>
            <person name="Nicchia G.P."/>
            <person name="Palazzo C."/>
            <person name="Lia A."/>
            <person name="Buccoliero C."/>
            <person name="Pisani F."/>
            <person name="Svelto M."/>
            <person name="Trojano M."/>
            <person name="Frigeri A."/>
        </authorList>
    </citation>
    <scope>TISSUE SPECIFICITY</scope>
    <scope>SUBCELLULAR LOCATION</scope>
</reference>
<reference key="8">
    <citation type="journal article" date="2009" name="Proc. Natl. Acad. Sci. U.S.A.">
        <title>Crystal structure of human aquaporin 4 at 1.8 A and its mechanism of conductance.</title>
        <authorList>
            <person name="Ho J.D."/>
            <person name="Yeh R."/>
            <person name="Sandstrom A."/>
            <person name="Chorny I."/>
            <person name="Harries W.E."/>
            <person name="Robbins R.A."/>
            <person name="Miercke L.J."/>
            <person name="Stroud R.M."/>
        </authorList>
    </citation>
    <scope>X-RAY CRYSTALLOGRAPHY (1.8 ANGSTROMS) OF 32-254</scope>
    <scope>FUNCTION</scope>
    <scope>TOPOLOGY</scope>
    <scope>SUBUNIT</scope>
    <scope>DOMAIN</scope>
</reference>
<reference key="9">
    <citation type="journal article" date="2023" name="Brain">
        <title>Aquaporin-4 and GPRC5B: old and new players in controlling brain oedema.</title>
        <authorList>
            <person name="Passchier E.M.J."/>
            <person name="Kerst S."/>
            <person name="Brouwers E."/>
            <person name="Hamilton E.M.C."/>
            <person name="Bisseling Q."/>
            <person name="Bugiani M."/>
            <person name="Waisfisz Q."/>
            <person name="Kitchen P."/>
            <person name="Unger L."/>
            <person name="Breur M."/>
            <person name="Hoogterp L."/>
            <person name="de Vries S.I."/>
            <person name="Abbink T.E.M."/>
            <person name="Kole M.H.P."/>
            <person name="Leurs R."/>
            <person name="Vischer H.F."/>
            <person name="Brignone M.S."/>
            <person name="Ambrosini E."/>
            <person name="Feillet F."/>
            <person name="Born A.P."/>
            <person name="Epstein L.G."/>
            <person name="Mansvelder H.D."/>
            <person name="Min R."/>
            <person name="van der Knaap M.S."/>
        </authorList>
    </citation>
    <scope>VARIANT MLC4 THR-215</scope>
    <scope>INVOLVEMENT IN MLC4</scope>
    <scope>CHARACTERIZATION OF VARIANT MLC4 THR-215</scope>
    <scope>FUNCTION</scope>
    <scope>TRANSPORTER ACTIVITY</scope>
    <scope>SUBCELLULAR LOCATION</scope>
</reference>
<accession>P55087</accession>
<accession>P78564</accession>
<organism>
    <name type="scientific">Homo sapiens</name>
    <name type="common">Human</name>
    <dbReference type="NCBI Taxonomy" id="9606"/>
    <lineage>
        <taxon>Eukaryota</taxon>
        <taxon>Metazoa</taxon>
        <taxon>Chordata</taxon>
        <taxon>Craniata</taxon>
        <taxon>Vertebrata</taxon>
        <taxon>Euteleostomi</taxon>
        <taxon>Mammalia</taxon>
        <taxon>Eutheria</taxon>
        <taxon>Euarchontoglires</taxon>
        <taxon>Primates</taxon>
        <taxon>Haplorrhini</taxon>
        <taxon>Catarrhini</taxon>
        <taxon>Hominidae</taxon>
        <taxon>Homo</taxon>
    </lineage>
</organism>
<protein>
    <recommendedName>
        <fullName>Aquaporin-4</fullName>
        <shortName>AQP-4</shortName>
    </recommendedName>
    <alternativeName>
        <fullName evidence="11">Mercurial-insensitive water channel</fullName>
        <shortName evidence="11">MIWC</shortName>
    </alternativeName>
    <alternativeName>
        <fullName>WCH4</fullName>
    </alternativeName>
</protein>
<sequence>MSDRPTARRWGKCGPLCTRENIMVAFKGVWTQAFWKAVTAEFLAMLIFVLLSLGSTINWGGTEKPLPVDMVLISLCFGLSIATMVQCFGHISGGHINPAVTVAMVCTRKISIAKSVFYIAAQCLGAIIGAGILYLVTPPSVVGGLGVTMVHGNLTAGHGLLVELIITFQLVFTIFASCDSKRTDVTGSIALAIGFSVAIGHLFAINYTGASMNPARSFGPAVIMGNWENHWIYWVGPIIGAVLAGGLYEYVFCPDVEFKRRFKEAFSKAAQQTKGSYMEVEDNRSQVETDDLILKPGVVHVIDVDRGEEKKGKDQSGEVLSSV</sequence>
<keyword id="KW-0002">3D-structure</keyword>
<keyword id="KW-0025">Alternative splicing</keyword>
<keyword id="KW-1003">Cell membrane</keyword>
<keyword id="KW-0966">Cell projection</keyword>
<keyword id="KW-0225">Disease variant</keyword>
<keyword id="KW-0967">Endosome</keyword>
<keyword id="KW-0325">Glycoprotein</keyword>
<keyword id="KW-0449">Lipoprotein</keyword>
<keyword id="KW-0472">Membrane</keyword>
<keyword id="KW-0564">Palmitate</keyword>
<keyword id="KW-0597">Phosphoprotein</keyword>
<keyword id="KW-1267">Proteomics identification</keyword>
<keyword id="KW-1185">Reference proteome</keyword>
<keyword id="KW-0677">Repeat</keyword>
<keyword id="KW-0812">Transmembrane</keyword>
<keyword id="KW-1133">Transmembrane helix</keyword>
<keyword id="KW-0813">Transport</keyword>
<gene>
    <name type="primary">AQP4</name>
</gene>
<feature type="chain" id="PRO_0000063948" description="Aquaporin-4">
    <location>
        <begin position="1"/>
        <end position="323"/>
    </location>
</feature>
<feature type="topological domain" description="Cytoplasmic" evidence="5">
    <location>
        <begin position="1"/>
        <end position="36"/>
    </location>
</feature>
<feature type="transmembrane region" description="Helical" evidence="5">
    <location>
        <begin position="37"/>
        <end position="57"/>
    </location>
</feature>
<feature type="topological domain" description="Extracellular" evidence="5">
    <location>
        <begin position="58"/>
        <end position="69"/>
    </location>
</feature>
<feature type="transmembrane region" description="Helical" evidence="5">
    <location>
        <begin position="70"/>
        <end position="89"/>
    </location>
</feature>
<feature type="topological domain" description="Cytoplasmic" evidence="5">
    <location>
        <begin position="90"/>
        <end position="93"/>
    </location>
</feature>
<feature type="intramembrane region" description="Discontinuously helical" evidence="5">
    <location>
        <begin position="94"/>
        <end position="101"/>
    </location>
</feature>
<feature type="topological domain" description="Cytoplasmic" evidence="5">
    <location>
        <begin position="102"/>
        <end position="115"/>
    </location>
</feature>
<feature type="transmembrane region" description="Helical" evidence="5">
    <location>
        <begin position="116"/>
        <end position="136"/>
    </location>
</feature>
<feature type="topological domain" description="Extracellular" evidence="5">
    <location>
        <begin position="137"/>
        <end position="155"/>
    </location>
</feature>
<feature type="transmembrane region" description="Helical" evidence="5">
    <location>
        <begin position="156"/>
        <end position="176"/>
    </location>
</feature>
<feature type="topological domain" description="Cytoplasmic" evidence="5">
    <location>
        <begin position="177"/>
        <end position="184"/>
    </location>
</feature>
<feature type="transmembrane region" description="Helical" evidence="5">
    <location>
        <begin position="185"/>
        <end position="205"/>
    </location>
</feature>
<feature type="topological domain" description="Extracellular" evidence="5">
    <location>
        <begin position="206"/>
        <end position="208"/>
    </location>
</feature>
<feature type="intramembrane region" description="Discontinuously helical" evidence="5">
    <location>
        <begin position="209"/>
        <end position="222"/>
    </location>
</feature>
<feature type="topological domain" description="Extracellular" evidence="5">
    <location>
        <begin position="223"/>
        <end position="231"/>
    </location>
</feature>
<feature type="transmembrane region" description="Helical" evidence="5">
    <location>
        <begin position="232"/>
        <end position="252"/>
    </location>
</feature>
<feature type="topological domain" description="Cytoplasmic" evidence="5">
    <location>
        <begin position="253"/>
        <end position="323"/>
    </location>
</feature>
<feature type="short sequence motif" description="NPA 1" evidence="13">
    <location>
        <begin position="97"/>
        <end position="99"/>
    </location>
</feature>
<feature type="short sequence motif" description="NPA 2" evidence="13">
    <location>
        <begin position="213"/>
        <end position="215"/>
    </location>
</feature>
<feature type="modified residue" description="Phosphoserine; by PKG" evidence="3">
    <location>
        <position position="111"/>
    </location>
</feature>
<feature type="modified residue" description="Phosphoserine; by PKC" evidence="2">
    <location>
        <position position="180"/>
    </location>
</feature>
<feature type="modified residue" description="Phosphoserine" evidence="2">
    <location>
        <position position="276"/>
    </location>
</feature>
<feature type="modified residue" description="Phosphoserine" evidence="3">
    <location>
        <position position="285"/>
    </location>
</feature>
<feature type="modified residue" description="Phosphothreonine" evidence="3">
    <location>
        <position position="289"/>
    </location>
</feature>
<feature type="modified residue" description="Phosphoserine" evidence="2">
    <location>
        <position position="321"/>
    </location>
</feature>
<feature type="lipid moiety-binding region" description="S-palmitoyl cysteine" evidence="2">
    <location>
        <position position="13"/>
    </location>
</feature>
<feature type="lipid moiety-binding region" description="S-palmitoyl cysteine" evidence="2">
    <location>
        <position position="17"/>
    </location>
</feature>
<feature type="glycosylation site" description="N-linked (GlcNAc...) asparagine" evidence="4">
    <location>
        <position position="153"/>
    </location>
</feature>
<feature type="glycosylation site" description="N-linked (GlcNAc...) asparagine" evidence="4">
    <location>
        <position position="206"/>
    </location>
</feature>
<feature type="splice variant" id="VSP_003232" description="In isoform 1." evidence="12">
    <location>
        <begin position="1"/>
        <end position="22"/>
    </location>
</feature>
<feature type="sequence variant" id="VAR_088778" description="In MLC4; likely pathogenic; loss of function in cell volume regulation; does not localize to the cell membrane." evidence="8">
    <original>A</original>
    <variation>T</variation>
    <location>
        <position position="215"/>
    </location>
</feature>
<feature type="sequence conflict" description="In Ref. 1; AAC52112." evidence="12" ref="1">
    <original>G</original>
    <variation>A</variation>
    <location>
        <position position="246"/>
    </location>
</feature>
<feature type="sequence conflict" description="In Ref. 1; AAC52112." evidence="12" ref="1">
    <original>VE</original>
    <variation>AK</variation>
    <location>
        <begin position="287"/>
        <end position="288"/>
    </location>
</feature>
<feature type="sequence conflict" description="In Ref. 1; AAC52112." evidence="12" ref="1">
    <original>P</original>
    <variation>L</variation>
    <location>
        <position position="296"/>
    </location>
</feature>
<feature type="helix" evidence="19">
    <location>
        <begin position="33"/>
        <end position="55"/>
    </location>
</feature>
<feature type="turn" evidence="19">
    <location>
        <begin position="59"/>
        <end position="63"/>
    </location>
</feature>
<feature type="helix" evidence="19">
    <location>
        <begin position="70"/>
        <end position="92"/>
    </location>
</feature>
<feature type="helix" evidence="19">
    <location>
        <begin position="98"/>
        <end position="106"/>
    </location>
</feature>
<feature type="helix" evidence="19">
    <location>
        <begin position="112"/>
        <end position="136"/>
    </location>
</feature>
<feature type="helix" evidence="19">
    <location>
        <begin position="139"/>
        <end position="142"/>
    </location>
</feature>
<feature type="turn" evidence="19">
    <location>
        <begin position="143"/>
        <end position="146"/>
    </location>
</feature>
<feature type="helix" evidence="19">
    <location>
        <begin position="156"/>
        <end position="177"/>
    </location>
</feature>
<feature type="helix" evidence="19">
    <location>
        <begin position="189"/>
        <end position="208"/>
    </location>
</feature>
<feature type="helix" evidence="19">
    <location>
        <begin position="214"/>
        <end position="224"/>
    </location>
</feature>
<feature type="turn" evidence="19">
    <location>
        <begin position="228"/>
        <end position="231"/>
    </location>
</feature>
<feature type="helix" evidence="19">
    <location>
        <begin position="232"/>
        <end position="250"/>
    </location>
</feature>
<dbReference type="EMBL" id="U34846">
    <property type="protein sequence ID" value="AAC52112.1"/>
    <property type="status" value="ALT_INIT"/>
    <property type="molecule type" value="mRNA"/>
</dbReference>
<dbReference type="EMBL" id="U34845">
    <property type="protein sequence ID" value="AAC50284.1"/>
    <property type="molecule type" value="mRNA"/>
</dbReference>
<dbReference type="EMBL" id="D63412">
    <property type="protein sequence ID" value="BAA09715.1"/>
    <property type="molecule type" value="mRNA"/>
</dbReference>
<dbReference type="EMBL" id="U63622">
    <property type="protein sequence ID" value="AAB26957.1"/>
    <property type="molecule type" value="mRNA"/>
</dbReference>
<dbReference type="EMBL" id="U63623">
    <property type="protein sequence ID" value="AAB26958.1"/>
    <property type="molecule type" value="mRNA"/>
</dbReference>
<dbReference type="EMBL" id="AC018371">
    <property type="status" value="NOT_ANNOTATED_CDS"/>
    <property type="molecule type" value="Genomic_DNA"/>
</dbReference>
<dbReference type="EMBL" id="BC022286">
    <property type="protein sequence ID" value="AAH22286.1"/>
    <property type="molecule type" value="mRNA"/>
</dbReference>
<dbReference type="CCDS" id="CCDS11889.1">
    <molecule id="P55087-1"/>
</dbReference>
<dbReference type="CCDS" id="CCDS58617.1">
    <molecule id="P55087-2"/>
</dbReference>
<dbReference type="PIR" id="I39178">
    <property type="entry name" value="I39178"/>
</dbReference>
<dbReference type="RefSeq" id="NP_001351215.1">
    <molecule id="P55087-2"/>
    <property type="nucleotide sequence ID" value="NM_001364286.1"/>
</dbReference>
<dbReference type="RefSeq" id="NP_001641.1">
    <molecule id="P55087-1"/>
    <property type="nucleotide sequence ID" value="NM_001650.7"/>
</dbReference>
<dbReference type="RefSeq" id="NP_004019.1">
    <molecule id="P55087-2"/>
    <property type="nucleotide sequence ID" value="NM_004028.5"/>
</dbReference>
<dbReference type="PDB" id="3GD8">
    <property type="method" value="X-ray"/>
    <property type="resolution" value="1.80 A"/>
    <property type="chains" value="A=32-254"/>
</dbReference>
<dbReference type="PDB" id="8V8S">
    <property type="method" value="EM"/>
    <property type="resolution" value="2.20 A"/>
    <property type="chains" value="A/B/C/D=1-323"/>
</dbReference>
<dbReference type="PDB" id="8V91">
    <property type="method" value="EM"/>
    <property type="resolution" value="2.60 A"/>
    <property type="chains" value="A/B/C/D=1-323"/>
</dbReference>
<dbReference type="PDB" id="8V9D">
    <property type="method" value="EM"/>
    <property type="resolution" value="2.90 A"/>
    <property type="chains" value="A/B/C/D=1-323"/>
</dbReference>
<dbReference type="PDBsum" id="3GD8"/>
<dbReference type="PDBsum" id="8V8S"/>
<dbReference type="PDBsum" id="8V91"/>
<dbReference type="PDBsum" id="8V9D"/>
<dbReference type="EMDB" id="EMD-43044"/>
<dbReference type="EMDB" id="EMD-43047"/>
<dbReference type="EMDB" id="EMD-43071"/>
<dbReference type="SMR" id="P55087"/>
<dbReference type="BioGRID" id="106857">
    <property type="interactions" value="10"/>
</dbReference>
<dbReference type="CORUM" id="P55087"/>
<dbReference type="DIP" id="DIP-48842N"/>
<dbReference type="FunCoup" id="P55087">
    <property type="interactions" value="245"/>
</dbReference>
<dbReference type="IntAct" id="P55087">
    <property type="interactions" value="6"/>
</dbReference>
<dbReference type="ChEMBL" id="CHEMBL5964"/>
<dbReference type="TCDB" id="1.A.8.8.5">
    <property type="family name" value="the major intrinsic protein (mip) family"/>
</dbReference>
<dbReference type="GlyCosmos" id="P55087">
    <property type="glycosylation" value="2 sites, No reported glycans"/>
</dbReference>
<dbReference type="GlyGen" id="P55087">
    <property type="glycosylation" value="4 sites"/>
</dbReference>
<dbReference type="iPTMnet" id="P55087"/>
<dbReference type="PhosphoSitePlus" id="P55087"/>
<dbReference type="SwissPalm" id="P55087"/>
<dbReference type="BioMuta" id="AQP4"/>
<dbReference type="DMDM" id="2506859"/>
<dbReference type="MassIVE" id="P55087"/>
<dbReference type="PaxDb" id="9606-ENSP00000372654"/>
<dbReference type="PeptideAtlas" id="P55087"/>
<dbReference type="ProteomicsDB" id="56788">
    <molecule id="P55087-1"/>
</dbReference>
<dbReference type="ProteomicsDB" id="56789">
    <molecule id="P55087-2"/>
</dbReference>
<dbReference type="Antibodypedia" id="3103">
    <property type="antibodies" value="601 antibodies from 38 providers"/>
</dbReference>
<dbReference type="DNASU" id="361"/>
<dbReference type="Ensembl" id="ENST00000383168.9">
    <molecule id="P55087-1"/>
    <property type="protein sequence ID" value="ENSP00000372654.4"/>
    <property type="gene ID" value="ENSG00000171885.18"/>
</dbReference>
<dbReference type="Ensembl" id="ENST00000440832.7">
    <molecule id="P55087-2"/>
    <property type="protein sequence ID" value="ENSP00000393121.3"/>
    <property type="gene ID" value="ENSG00000171885.18"/>
</dbReference>
<dbReference type="Ensembl" id="ENST00000581374.5">
    <molecule id="P55087-2"/>
    <property type="protein sequence ID" value="ENSP00000462597.1"/>
    <property type="gene ID" value="ENSG00000171885.18"/>
</dbReference>
<dbReference type="Ensembl" id="ENST00000672188.1">
    <molecule id="P55087-1"/>
    <property type="protein sequence ID" value="ENSP00000500720.1"/>
    <property type="gene ID" value="ENSG00000171885.18"/>
</dbReference>
<dbReference type="GeneID" id="361"/>
<dbReference type="KEGG" id="hsa:361"/>
<dbReference type="MANE-Select" id="ENST00000383168.9">
    <property type="protein sequence ID" value="ENSP00000372654.4"/>
    <property type="RefSeq nucleotide sequence ID" value="NM_001650.7"/>
    <property type="RefSeq protein sequence ID" value="NP_001641.1"/>
</dbReference>
<dbReference type="UCSC" id="uc002kvz.4">
    <molecule id="P55087-1"/>
    <property type="organism name" value="human"/>
</dbReference>
<dbReference type="AGR" id="HGNC:637"/>
<dbReference type="CTD" id="361"/>
<dbReference type="DisGeNET" id="361"/>
<dbReference type="GeneCards" id="AQP4"/>
<dbReference type="GeneReviews" id="AQP4"/>
<dbReference type="HGNC" id="HGNC:637">
    <property type="gene designation" value="AQP4"/>
</dbReference>
<dbReference type="HPA" id="ENSG00000171885">
    <property type="expression patterns" value="Group enriched (brain, lung)"/>
</dbReference>
<dbReference type="MalaCards" id="AQP4"/>
<dbReference type="MIM" id="600308">
    <property type="type" value="gene"/>
</dbReference>
<dbReference type="MIM" id="620448">
    <property type="type" value="phenotype"/>
</dbReference>
<dbReference type="neXtProt" id="NX_P55087"/>
<dbReference type="OpenTargets" id="ENSG00000171885"/>
<dbReference type="PharmGKB" id="PA24922"/>
<dbReference type="VEuPathDB" id="HostDB:ENSG00000171885"/>
<dbReference type="eggNOG" id="KOG0223">
    <property type="taxonomic scope" value="Eukaryota"/>
</dbReference>
<dbReference type="GeneTree" id="ENSGT00940000156037"/>
<dbReference type="InParanoid" id="P55087"/>
<dbReference type="OMA" id="MHYEEAN"/>
<dbReference type="OrthoDB" id="3222at2759"/>
<dbReference type="PAN-GO" id="P55087">
    <property type="GO annotations" value="5 GO annotations based on evolutionary models"/>
</dbReference>
<dbReference type="PhylomeDB" id="P55087"/>
<dbReference type="TreeFam" id="TF312940"/>
<dbReference type="PathwayCommons" id="P55087"/>
<dbReference type="Reactome" id="R-HSA-432040">
    <property type="pathway name" value="Vasopressin regulates renal water homeostasis via Aquaporins"/>
</dbReference>
<dbReference type="Reactome" id="R-HSA-432047">
    <property type="pathway name" value="Passive transport by Aquaporins"/>
</dbReference>
<dbReference type="SignaLink" id="P55087"/>
<dbReference type="SIGNOR" id="P55087"/>
<dbReference type="BioGRID-ORCS" id="361">
    <property type="hits" value="9 hits in 1138 CRISPR screens"/>
</dbReference>
<dbReference type="CD-CODE" id="FB4E32DD">
    <property type="entry name" value="Presynaptic clusters and postsynaptic densities"/>
</dbReference>
<dbReference type="ChiTaRS" id="AQP4">
    <property type="organism name" value="human"/>
</dbReference>
<dbReference type="EvolutionaryTrace" id="P55087"/>
<dbReference type="GeneWiki" id="Aquaporin_4"/>
<dbReference type="GenomeRNAi" id="361"/>
<dbReference type="Pharos" id="P55087">
    <property type="development level" value="Tbio"/>
</dbReference>
<dbReference type="PRO" id="PR:P55087"/>
<dbReference type="Proteomes" id="UP000005640">
    <property type="component" value="Chromosome 18"/>
</dbReference>
<dbReference type="RNAct" id="P55087">
    <property type="molecule type" value="protein"/>
</dbReference>
<dbReference type="Bgee" id="ENSG00000171885">
    <property type="expression patterns" value="Expressed in lateral globus pallidus and 154 other cell types or tissues"/>
</dbReference>
<dbReference type="ExpressionAtlas" id="P55087">
    <property type="expression patterns" value="baseline and differential"/>
</dbReference>
<dbReference type="GO" id="GO:0097450">
    <property type="term" value="C:astrocyte end-foot"/>
    <property type="evidence" value="ECO:0000250"/>
    <property type="project" value="UniProtKB"/>
</dbReference>
<dbReference type="GO" id="GO:0016323">
    <property type="term" value="C:basolateral plasma membrane"/>
    <property type="evidence" value="ECO:0000250"/>
    <property type="project" value="UniProtKB"/>
</dbReference>
<dbReference type="GO" id="GO:0005737">
    <property type="term" value="C:cytoplasm"/>
    <property type="evidence" value="ECO:0000314"/>
    <property type="project" value="UniProtKB"/>
</dbReference>
<dbReference type="GO" id="GO:0010008">
    <property type="term" value="C:endosome membrane"/>
    <property type="evidence" value="ECO:0007669"/>
    <property type="project" value="UniProtKB-SubCell"/>
</dbReference>
<dbReference type="GO" id="GO:0009897">
    <property type="term" value="C:external side of plasma membrane"/>
    <property type="evidence" value="ECO:0000314"/>
    <property type="project" value="UniProtKB"/>
</dbReference>
<dbReference type="GO" id="GO:0005576">
    <property type="term" value="C:extracellular region"/>
    <property type="evidence" value="ECO:0007669"/>
    <property type="project" value="GOC"/>
</dbReference>
<dbReference type="GO" id="GO:0005886">
    <property type="term" value="C:plasma membrane"/>
    <property type="evidence" value="ECO:0000314"/>
    <property type="project" value="HPA"/>
</dbReference>
<dbReference type="GO" id="GO:0042383">
    <property type="term" value="C:sarcolemma"/>
    <property type="evidence" value="ECO:0000314"/>
    <property type="project" value="UniProtKB"/>
</dbReference>
<dbReference type="GO" id="GO:0042802">
    <property type="term" value="F:identical protein binding"/>
    <property type="evidence" value="ECO:0000353"/>
    <property type="project" value="IntAct"/>
</dbReference>
<dbReference type="GO" id="GO:0015250">
    <property type="term" value="F:water channel activity"/>
    <property type="evidence" value="ECO:0000314"/>
    <property type="project" value="UniProtKB"/>
</dbReference>
<dbReference type="GO" id="GO:0071346">
    <property type="term" value="P:cellular response to type II interferon"/>
    <property type="evidence" value="ECO:0000314"/>
    <property type="project" value="UniProtKB"/>
</dbReference>
<dbReference type="GO" id="GO:0090660">
    <property type="term" value="P:cerebrospinal fluid circulation"/>
    <property type="evidence" value="ECO:0000250"/>
    <property type="project" value="UniProtKB"/>
</dbReference>
<dbReference type="GO" id="GO:0009992">
    <property type="term" value="P:intracellular water homeostasis"/>
    <property type="evidence" value="ECO:0000315"/>
    <property type="project" value="UniProtKB"/>
</dbReference>
<dbReference type="GO" id="GO:0050891">
    <property type="term" value="P:multicellular organismal-level water homeostasis"/>
    <property type="evidence" value="ECO:0000270"/>
    <property type="project" value="UniProtKB"/>
</dbReference>
<dbReference type="GO" id="GO:0051289">
    <property type="term" value="P:protein homotetramerization"/>
    <property type="evidence" value="ECO:0000314"/>
    <property type="project" value="UniProtKB"/>
</dbReference>
<dbReference type="GO" id="GO:0003091">
    <property type="term" value="P:renal water homeostasis"/>
    <property type="evidence" value="ECO:0000304"/>
    <property type="project" value="Reactome"/>
</dbReference>
<dbReference type="GO" id="GO:0006833">
    <property type="term" value="P:water transport"/>
    <property type="evidence" value="ECO:0000314"/>
    <property type="project" value="UniProtKB"/>
</dbReference>
<dbReference type="CDD" id="cd00333">
    <property type="entry name" value="MIP"/>
    <property type="match status" value="1"/>
</dbReference>
<dbReference type="FunFam" id="1.20.1080.10:FF:000009">
    <property type="entry name" value="aquaporin-4 isoform X1"/>
    <property type="match status" value="1"/>
</dbReference>
<dbReference type="Gene3D" id="1.20.1080.10">
    <property type="entry name" value="Glycerol uptake facilitator protein"/>
    <property type="match status" value="1"/>
</dbReference>
<dbReference type="InterPro" id="IPR023271">
    <property type="entry name" value="Aquaporin-like"/>
</dbReference>
<dbReference type="InterPro" id="IPR034294">
    <property type="entry name" value="Aquaporin_transptr"/>
</dbReference>
<dbReference type="InterPro" id="IPR000425">
    <property type="entry name" value="MIP"/>
</dbReference>
<dbReference type="InterPro" id="IPR022357">
    <property type="entry name" value="MIP_CS"/>
</dbReference>
<dbReference type="NCBIfam" id="TIGR00861">
    <property type="entry name" value="MIP"/>
    <property type="match status" value="1"/>
</dbReference>
<dbReference type="PANTHER" id="PTHR19139">
    <property type="entry name" value="AQUAPORIN TRANSPORTER"/>
    <property type="match status" value="1"/>
</dbReference>
<dbReference type="PANTHER" id="PTHR19139:SF34">
    <property type="entry name" value="AQUAPORIN-4"/>
    <property type="match status" value="1"/>
</dbReference>
<dbReference type="Pfam" id="PF00230">
    <property type="entry name" value="MIP"/>
    <property type="match status" value="1"/>
</dbReference>
<dbReference type="PRINTS" id="PR02016">
    <property type="entry name" value="AQUAPORIN4"/>
</dbReference>
<dbReference type="PRINTS" id="PR00783">
    <property type="entry name" value="MINTRINSICP"/>
</dbReference>
<dbReference type="SUPFAM" id="SSF81338">
    <property type="entry name" value="Aquaporin-like"/>
    <property type="match status" value="1"/>
</dbReference>
<dbReference type="PROSITE" id="PS00221">
    <property type="entry name" value="MIP"/>
    <property type="match status" value="1"/>
</dbReference>
<proteinExistence type="evidence at protein level"/>
<evidence type="ECO:0000250" key="1"/>
<evidence type="ECO:0000250" key="2">
    <source>
        <dbReference type="UniProtKB" id="P47863"/>
    </source>
</evidence>
<evidence type="ECO:0000250" key="3">
    <source>
        <dbReference type="UniProtKB" id="P55088"/>
    </source>
</evidence>
<evidence type="ECO:0000255" key="4"/>
<evidence type="ECO:0000269" key="5">
    <source>
    </source>
</evidence>
<evidence type="ECO:0000269" key="6">
    <source>
    </source>
</evidence>
<evidence type="ECO:0000269" key="7">
    <source>
    </source>
</evidence>
<evidence type="ECO:0000269" key="8">
    <source>
    </source>
</evidence>
<evidence type="ECO:0000269" key="9">
    <source>
    </source>
</evidence>
<evidence type="ECO:0000269" key="10">
    <source>
    </source>
</evidence>
<evidence type="ECO:0000303" key="11">
    <source>
    </source>
</evidence>
<evidence type="ECO:0000305" key="12"/>
<evidence type="ECO:0000305" key="13">
    <source>
    </source>
</evidence>
<evidence type="ECO:0000312" key="14">
    <source>
        <dbReference type="EMBL" id="AAB26957.1"/>
    </source>
</evidence>
<evidence type="ECO:0000312" key="15">
    <source>
        <dbReference type="EMBL" id="AAB26958.1"/>
    </source>
</evidence>
<evidence type="ECO:0000312" key="16">
    <source>
        <dbReference type="EMBL" id="AAC50284.1"/>
    </source>
</evidence>
<evidence type="ECO:0000312" key="17">
    <source>
        <dbReference type="EMBL" id="AAC52112.1"/>
    </source>
</evidence>
<evidence type="ECO:0000312" key="18">
    <source>
        <dbReference type="EMBL" id="BAA09715.1"/>
    </source>
</evidence>
<evidence type="ECO:0007829" key="19">
    <source>
        <dbReference type="PDB" id="3GD8"/>
    </source>
</evidence>
<name>AQP4_HUMAN</name>
<comment type="function">
    <text evidence="3 5 8 9 10">Forms a water-specific channel (PubMed:19383790, PubMed:7559426, PubMed:8601457). Plays an important role in brain water homeostasis (PubMed:37143309). It is involved in glymphatic solute transport and is required for a normal rate of water exchange across the blood brain interface. Required for normal levels of cerebrospinal fluid influx into the brain cortex and parenchyma along paravascular spaces that surround penetrating arteries, and for normal drainage of interstitial fluid along paravenous drainage pathways. Thereby, it is required for normal clearance of solutes from the brain interstitial fluid, including soluble beta-amyloid peptides derived from APP. Plays a redundant role in urinary water homeostasis and urinary concentrating ability (By similarity).</text>
</comment>
<comment type="catalytic activity">
    <reaction evidence="8">
        <text>H2O(in) = H2O(out)</text>
        <dbReference type="Rhea" id="RHEA:29667"/>
        <dbReference type="ChEBI" id="CHEBI:15377"/>
    </reaction>
</comment>
<comment type="subunit">
    <text evidence="2 5 6">Homotetramer (PubMed:19383790). The tetramers can form oligomeric arrays in membranes. The size of the oligomers differs between tissues and is smaller in skeletal muscle than in brain. Interaction between AQP4 oligomeric arrays in close-by cells can contribute to cell-cell adhesion (By similarity). Part of a complex containing MLC1, TRPV4, HEPACAM and ATP1B1 (PubMed:22328087).</text>
</comment>
<comment type="interaction">
    <interactant intactId="EBI-10104898">
        <id>P55087</id>
    </interactant>
    <interactant intactId="EBI-625022">
        <id>O43889-2</id>
        <label>CREB3</label>
    </interactant>
    <organismsDiffer>false</organismsDiffer>
    <experiments>3</experiments>
</comment>
<comment type="interaction">
    <interactant intactId="EBI-10104898">
        <id>P55087</id>
    </interactant>
    <interactant intactId="EBI-17458373">
        <id>P48165</id>
        <label>GJA8</label>
    </interactant>
    <organismsDiffer>false</organismsDiffer>
    <experiments>3</experiments>
</comment>
<comment type="interaction">
    <interactant intactId="EBI-10104898">
        <id>P55087</id>
    </interactant>
    <interactant intactId="EBI-744820">
        <id>Q9UM19</id>
        <label>HPCAL4</label>
    </interactant>
    <organismsDiffer>false</organismsDiffer>
    <experiments>3</experiments>
</comment>
<comment type="interaction">
    <interactant intactId="EBI-10104898">
        <id>P55087</id>
    </interactant>
    <interactant intactId="EBI-22114623">
        <id>Q5T9L3-1</id>
        <label>WLS</label>
    </interactant>
    <organismsDiffer>false</organismsDiffer>
    <experiments>3</experiments>
</comment>
<comment type="interaction">
    <interactant intactId="EBI-15771758">
        <id>P55087-1</id>
    </interactant>
    <interactant intactId="EBI-15771758">
        <id>P55087-1</id>
        <label>AQP4</label>
    </interactant>
    <organismsDiffer>false</organismsDiffer>
    <experiments>2</experiments>
</comment>
<comment type="subcellular location">
    <subcellularLocation>
        <location evidence="8 9 10">Cell membrane</location>
        <topology evidence="5">Multi-pass membrane protein</topology>
    </subcellularLocation>
    <subcellularLocation>
        <location evidence="3">Basolateral cell membrane</location>
        <topology evidence="5">Multi-pass membrane protein</topology>
    </subcellularLocation>
    <subcellularLocation>
        <location evidence="2">Endosome membrane</location>
    </subcellularLocation>
    <subcellularLocation>
        <location evidence="7">Cell membrane</location>
        <location evidence="7">Sarcolemma</location>
        <topology evidence="5">Multi-pass membrane protein</topology>
    </subcellularLocation>
    <subcellularLocation>
        <location evidence="2">Cell projection</location>
    </subcellularLocation>
    <text evidence="2">Activation of the vasopressin receptor AVPR1A triggers AQP4 phosphorylation at Ser-180 and promotes its internalization from the cell membrane. Detected on brain astrocyte processes and astrocyte endfeet close to capillaries.</text>
</comment>
<comment type="alternative products">
    <event type="alternative splicing"/>
    <isoform>
        <id>P55087-1</id>
        <name>2</name>
        <name evidence="12">AQP4-M1</name>
        <sequence type="displayed"/>
    </isoform>
    <isoform>
        <id>P55087-2</id>
        <name>1</name>
        <name evidence="12">AQP4-M23</name>
        <sequence type="described" ref="VSP_003232"/>
    </isoform>
</comment>
<comment type="tissue specificity">
    <text evidence="7 9 10">Detected in skeletal muscle (PubMed:29055082). Detected in stomach, along the glandular base region of the fundic gland (at protein level) (PubMed:8601457). Detected in brain, lung and skeletal muscle, and at much lower levels in heart and ovary (PubMed:7559426, PubMed:8601457).</text>
</comment>
<comment type="domain">
    <text evidence="5">Aquaporins contain two tandem repeats each containing three membrane-spanning domains and a pore-forming loop with the signature motif Asn-Pro-Ala (NPA).</text>
</comment>
<comment type="PTM">
    <text evidence="1">Phosphorylation by PKC at Ser-180 reduces conductance by 50%. Phosphorylation by PKG at Ser-111 in response to glutamate increases conductance by 40% (By similarity).</text>
</comment>
<comment type="PTM">
    <text evidence="2">Isoform 2: Palmitoylated on its N-terminal region. Isoform 1: Not palmitoylated.</text>
</comment>
<comment type="disease" evidence="8">
    <disease id="DI-06723">
        <name>Megalencephalic leukoencephalopathy with subcortical cysts 4, remitting</name>
        <acronym>MLC4</acronym>
        <description>An autosomal recessive disorder characterized by macrocephaly apparent in infancy, developmental delay, delayed walking, variable cognitive decline, behavioral abnormalities, and early-onset seizures. Brain imaging shows swelling of the cerebral white matter and subcortical cysts in the anterior temporal region. The severity of neurologic dysfunction and brain abnormalities tends to improve with time, indicating a remitting disease course.</description>
        <dbReference type="MIM" id="620448"/>
    </disease>
    <text>The disease may be caused by variants affecting the gene represented in this entry.</text>
</comment>
<comment type="similarity">
    <text evidence="12">Belongs to the MIP/aquaporin (TC 1.A.8) family.</text>
</comment>
<comment type="sequence caution" evidence="12">
    <conflict type="erroneous initiation">
        <sequence resource="EMBL-CDS" id="AAC52112"/>
    </conflict>
    <text>Extended N-terminus.</text>
</comment>
<comment type="online information" name="Atlas of Genetics and Cytogenetics in Oncology and Haematology">
    <link uri="https://atlasgeneticsoncology.org/gene/684/AQP4"/>
</comment>